<gene>
    <name type="primary">ND5</name>
    <name type="ORF">CNAG_09006</name>
</gene>
<sequence>MYLAILALPMFGSAVAGLRGRTIGVTGAHIITTGCLMTSAALSIVAFYEVGLSGSPVSIVIGSWIDSEFMLVQWGFLFDSLTVSMLLPVLIVSSLVHLYSISYMAGDPHNQRFFSYLSMFTFFMLVLVAGDNYFIMFVGWEGIGISSYLLINFWYTRMQANKAGMKALTVNRVGDMFLSVGFFAIFWVFGNVDYASVFSVAPYINETAITIIGLLLLVGAMAKSANIPLHTWLPDAMEGPTPVSALIHAATLVTAGVYLMLRSSPIIEYGPTVLVVITWVGALTAFFAATTGLLQNDLKRVIAYSTCSQMGYLFMAVGLSQYNVALFHLVNHAFFKALLFLAAGAVIHGMADQQDLRRLGGLVNFLPFTYTAILIGSLSLMALPFMTGFYSKDLILEVALGQYEVSGTIAYWLGTISAVFTAFYSFRLVSLTFFTTPNAPKGDYLHAHEAPMIIVIPLVILSIMSIVFGYIAKDMFVGVGTDFLSTALFQHPDHITLIEAEFGLPLLMKLLPAIGSLFGAGLALYLYHVVPSITISLTNGPIGYGVYSFLNAKWYWDALYNGLIIESGLRIGLVISKVIDRGIIELTGPYGLSTVLTGAGRSVATYDTGVITSYALYIMLGLVSLIFLVFAPTNMVFNEYGLSLILVYLSALVLLPSSTRTS</sequence>
<comment type="function">
    <text evidence="1">Core subunit of the mitochondrial membrane respiratory chain NADH dehydrogenase (Complex I) that is believed to belong to the minimal assembly required for catalysis. Complex I functions in the transfer of electrons from NADH to the respiratory chain. The immediate electron acceptor for the enzyme is believed to be ubiquinone (By similarity).</text>
</comment>
<comment type="catalytic activity">
    <reaction>
        <text>a ubiquinone + NADH + 5 H(+)(in) = a ubiquinol + NAD(+) + 4 H(+)(out)</text>
        <dbReference type="Rhea" id="RHEA:29091"/>
        <dbReference type="Rhea" id="RHEA-COMP:9565"/>
        <dbReference type="Rhea" id="RHEA-COMP:9566"/>
        <dbReference type="ChEBI" id="CHEBI:15378"/>
        <dbReference type="ChEBI" id="CHEBI:16389"/>
        <dbReference type="ChEBI" id="CHEBI:17976"/>
        <dbReference type="ChEBI" id="CHEBI:57540"/>
        <dbReference type="ChEBI" id="CHEBI:57945"/>
        <dbReference type="EC" id="7.1.1.2"/>
    </reaction>
</comment>
<comment type="subcellular location">
    <subcellularLocation>
        <location evidence="1">Mitochondrion inner membrane</location>
        <topology evidence="1">Multi-pass membrane protein</topology>
    </subcellularLocation>
</comment>
<comment type="similarity">
    <text evidence="3">Belongs to the complex I subunit 5 family.</text>
</comment>
<name>NU5M_CRYNH</name>
<keyword id="KW-0249">Electron transport</keyword>
<keyword id="KW-0472">Membrane</keyword>
<keyword id="KW-0496">Mitochondrion</keyword>
<keyword id="KW-0999">Mitochondrion inner membrane</keyword>
<keyword id="KW-0520">NAD</keyword>
<keyword id="KW-0679">Respiratory chain</keyword>
<keyword id="KW-1278">Translocase</keyword>
<keyword id="KW-0812">Transmembrane</keyword>
<keyword id="KW-1133">Transmembrane helix</keyword>
<keyword id="KW-0813">Transport</keyword>
<keyword id="KW-0830">Ubiquinone</keyword>
<evidence type="ECO:0000250" key="1"/>
<evidence type="ECO:0000255" key="2"/>
<evidence type="ECO:0000305" key="3"/>
<protein>
    <recommendedName>
        <fullName>NADH-ubiquinone oxidoreductase chain 5</fullName>
        <ecNumber>7.1.1.2</ecNumber>
    </recommendedName>
</protein>
<geneLocation type="mitochondrion"/>
<reference key="1">
    <citation type="submission" date="2002-05" db="EMBL/GenBank/DDBJ databases">
        <title>Sequence of the mitochondrial genome of Cryptococcus neoformans serotype A strain H99.</title>
        <authorList>
            <person name="Allen A."/>
            <person name="Truesdell G."/>
            <person name="Li X."/>
            <person name="Dietrich F.S."/>
        </authorList>
    </citation>
    <scope>NUCLEOTIDE SEQUENCE [LARGE SCALE GENOMIC DNA]</scope>
    <source>
        <strain>H99 / ATCC 208821 / CBS 10515 / FGSC 9487</strain>
    </source>
</reference>
<reference key="2">
    <citation type="journal article" date="2014" name="PLoS Genet.">
        <title>Analysis of the genome and transcriptome of Cryptococcus neoformans var. grubii reveals complex RNA expression and microevolution leading to virulence attenuation.</title>
        <authorList>
            <person name="Janbon G."/>
            <person name="Ormerod K.L."/>
            <person name="Paulet D."/>
            <person name="Byrnes E.J. III"/>
            <person name="Yadav V."/>
            <person name="Chatterjee G."/>
            <person name="Mullapudi N."/>
            <person name="Hon C.-C."/>
            <person name="Billmyre R.B."/>
            <person name="Brunel F."/>
            <person name="Bahn Y.-S."/>
            <person name="Chen W."/>
            <person name="Chen Y."/>
            <person name="Chow E.W.L."/>
            <person name="Coppee J.-Y."/>
            <person name="Floyd-Averette A."/>
            <person name="Gaillardin C."/>
            <person name="Gerik K.J."/>
            <person name="Goldberg J."/>
            <person name="Gonzalez-Hilarion S."/>
            <person name="Gujja S."/>
            <person name="Hamlin J.L."/>
            <person name="Hsueh Y.-P."/>
            <person name="Ianiri G."/>
            <person name="Jones S."/>
            <person name="Kodira C.D."/>
            <person name="Kozubowski L."/>
            <person name="Lam W."/>
            <person name="Marra M."/>
            <person name="Mesner L.D."/>
            <person name="Mieczkowski P.A."/>
            <person name="Moyrand F."/>
            <person name="Nielsen K."/>
            <person name="Proux C."/>
            <person name="Rossignol T."/>
            <person name="Schein J.E."/>
            <person name="Sun S."/>
            <person name="Wollschlaeger C."/>
            <person name="Wood I.A."/>
            <person name="Zeng Q."/>
            <person name="Neuveglise C."/>
            <person name="Newlon C.S."/>
            <person name="Perfect J.R."/>
            <person name="Lodge J.K."/>
            <person name="Idnurm A."/>
            <person name="Stajich J.E."/>
            <person name="Kronstad J.W."/>
            <person name="Sanyal K."/>
            <person name="Heitman J."/>
            <person name="Fraser J.A."/>
            <person name="Cuomo C.A."/>
            <person name="Dietrich F.S."/>
        </authorList>
    </citation>
    <scope>NUCLEOTIDE SEQUENCE [LARGE SCALE GENOMIC DNA]</scope>
    <source>
        <strain>H99 / ATCC 208821 / CBS 10515 / FGSC 9487</strain>
    </source>
</reference>
<accession>Q85T01</accession>
<accession>J9VXW2</accession>
<organism>
    <name type="scientific">Cryptococcus neoformans var. grubii serotype A (strain H99 / ATCC 208821 / CBS 10515 / FGSC 9487)</name>
    <name type="common">Filobasidiella neoformans var. grubii</name>
    <dbReference type="NCBI Taxonomy" id="235443"/>
    <lineage>
        <taxon>Eukaryota</taxon>
        <taxon>Fungi</taxon>
        <taxon>Dikarya</taxon>
        <taxon>Basidiomycota</taxon>
        <taxon>Agaricomycotina</taxon>
        <taxon>Tremellomycetes</taxon>
        <taxon>Tremellales</taxon>
        <taxon>Cryptococcaceae</taxon>
        <taxon>Cryptococcus</taxon>
        <taxon>Cryptococcus neoformans species complex</taxon>
    </lineage>
</organism>
<feature type="chain" id="PRO_0000118083" description="NADH-ubiquinone oxidoreductase chain 5">
    <location>
        <begin position="1"/>
        <end position="662"/>
    </location>
</feature>
<feature type="transmembrane region" description="Helical" evidence="2">
    <location>
        <begin position="40"/>
        <end position="62"/>
    </location>
</feature>
<feature type="transmembrane region" description="Helical" evidence="2">
    <location>
        <begin position="77"/>
        <end position="99"/>
    </location>
</feature>
<feature type="transmembrane region" description="Helical" evidence="2">
    <location>
        <begin position="112"/>
        <end position="129"/>
    </location>
</feature>
<feature type="transmembrane region" description="Helical" evidence="2">
    <location>
        <begin position="133"/>
        <end position="155"/>
    </location>
</feature>
<feature type="transmembrane region" description="Helical" evidence="2">
    <location>
        <begin position="168"/>
        <end position="190"/>
    </location>
</feature>
<feature type="transmembrane region" description="Helical" evidence="2">
    <location>
        <begin position="200"/>
        <end position="222"/>
    </location>
</feature>
<feature type="transmembrane region" description="Helical" evidence="2">
    <location>
        <begin position="243"/>
        <end position="262"/>
    </location>
</feature>
<feature type="transmembrane region" description="Helical" evidence="2">
    <location>
        <begin position="272"/>
        <end position="294"/>
    </location>
</feature>
<feature type="transmembrane region" description="Helical" evidence="2">
    <location>
        <begin position="301"/>
        <end position="320"/>
    </location>
</feature>
<feature type="transmembrane region" description="Helical" evidence="2">
    <location>
        <begin position="325"/>
        <end position="347"/>
    </location>
</feature>
<feature type="transmembrane region" description="Helical" evidence="2">
    <location>
        <begin position="360"/>
        <end position="382"/>
    </location>
</feature>
<feature type="transmembrane region" description="Helical" evidence="2">
    <location>
        <begin position="408"/>
        <end position="430"/>
    </location>
</feature>
<feature type="transmembrane region" description="Helical" evidence="2">
    <location>
        <begin position="450"/>
        <end position="472"/>
    </location>
</feature>
<feature type="transmembrane region" description="Helical" evidence="2">
    <location>
        <begin position="510"/>
        <end position="529"/>
    </location>
</feature>
<feature type="transmembrane region" description="Helical" evidence="2">
    <location>
        <begin position="609"/>
        <end position="631"/>
    </location>
</feature>
<feature type="transmembrane region" description="Helical" evidence="2">
    <location>
        <begin position="636"/>
        <end position="658"/>
    </location>
</feature>
<dbReference type="EC" id="7.1.1.2"/>
<dbReference type="EMBL" id="AY101381">
    <property type="protein sequence ID" value="AAN37584.1"/>
    <property type="molecule type" value="Genomic_DNA"/>
</dbReference>
<dbReference type="EMBL" id="CP003834">
    <property type="protein sequence ID" value="AFR99108.1"/>
    <property type="molecule type" value="Genomic_DNA"/>
</dbReference>
<dbReference type="RefSeq" id="NP_705908.1">
    <property type="nucleotide sequence ID" value="NC_004336.1"/>
</dbReference>
<dbReference type="RefSeq" id="YP_006883713.1">
    <property type="nucleotide sequence ID" value="NC_018792.1"/>
</dbReference>
<dbReference type="SMR" id="Q85T01"/>
<dbReference type="GeneID" id="13824773"/>
<dbReference type="GeneID" id="805396"/>
<dbReference type="KEGG" id="cng:CNAG_09006"/>
<dbReference type="VEuPathDB" id="FungiDB:CNAG_09006"/>
<dbReference type="HOGENOM" id="CLU_007100_6_0_1"/>
<dbReference type="PRO" id="PR:Q85T01"/>
<dbReference type="Proteomes" id="UP000010091">
    <property type="component" value="Mitochondrion"/>
</dbReference>
<dbReference type="GO" id="GO:0005743">
    <property type="term" value="C:mitochondrial inner membrane"/>
    <property type="evidence" value="ECO:0007669"/>
    <property type="project" value="UniProtKB-SubCell"/>
</dbReference>
<dbReference type="GO" id="GO:0008137">
    <property type="term" value="F:NADH dehydrogenase (ubiquinone) activity"/>
    <property type="evidence" value="ECO:0007669"/>
    <property type="project" value="UniProtKB-EC"/>
</dbReference>
<dbReference type="GO" id="GO:0042773">
    <property type="term" value="P:ATP synthesis coupled electron transport"/>
    <property type="evidence" value="ECO:0007669"/>
    <property type="project" value="InterPro"/>
</dbReference>
<dbReference type="GO" id="GO:0015990">
    <property type="term" value="P:electron transport coupled proton transport"/>
    <property type="evidence" value="ECO:0007669"/>
    <property type="project" value="TreeGrafter"/>
</dbReference>
<dbReference type="Gene3D" id="1.20.5.2700">
    <property type="match status" value="1"/>
</dbReference>
<dbReference type="InterPro" id="IPR010934">
    <property type="entry name" value="NADH_DH_su5_C"/>
</dbReference>
<dbReference type="InterPro" id="IPR018393">
    <property type="entry name" value="NADHpl_OxRdtase_5_subgr"/>
</dbReference>
<dbReference type="InterPro" id="IPR001750">
    <property type="entry name" value="ND/Mrp_TM"/>
</dbReference>
<dbReference type="InterPro" id="IPR003945">
    <property type="entry name" value="NU5C-like"/>
</dbReference>
<dbReference type="InterPro" id="IPR001516">
    <property type="entry name" value="Proton_antipo_N"/>
</dbReference>
<dbReference type="NCBIfam" id="TIGR01974">
    <property type="entry name" value="NDH_I_L"/>
    <property type="match status" value="1"/>
</dbReference>
<dbReference type="NCBIfam" id="NF005141">
    <property type="entry name" value="PRK06590.1"/>
    <property type="match status" value="1"/>
</dbReference>
<dbReference type="PANTHER" id="PTHR42829">
    <property type="entry name" value="NADH-UBIQUINONE OXIDOREDUCTASE CHAIN 5"/>
    <property type="match status" value="1"/>
</dbReference>
<dbReference type="PANTHER" id="PTHR42829:SF2">
    <property type="entry name" value="NADH-UBIQUINONE OXIDOREDUCTASE CHAIN 5"/>
    <property type="match status" value="1"/>
</dbReference>
<dbReference type="Pfam" id="PF06455">
    <property type="entry name" value="NADH5_C"/>
    <property type="match status" value="1"/>
</dbReference>
<dbReference type="Pfam" id="PF00361">
    <property type="entry name" value="Proton_antipo_M"/>
    <property type="match status" value="1"/>
</dbReference>
<dbReference type="Pfam" id="PF00662">
    <property type="entry name" value="Proton_antipo_N"/>
    <property type="match status" value="1"/>
</dbReference>
<dbReference type="PRINTS" id="PR01434">
    <property type="entry name" value="NADHDHGNASE5"/>
</dbReference>
<dbReference type="PRINTS" id="PR01435">
    <property type="entry name" value="NPOXDRDTASE5"/>
</dbReference>
<proteinExistence type="inferred from homology"/>